<name>CLPX_BACCQ</name>
<accession>B9IZ47</accession>
<feature type="chain" id="PRO_1000123822" description="ATP-dependent Clp protease ATP-binding subunit ClpX">
    <location>
        <begin position="1"/>
        <end position="419"/>
    </location>
</feature>
<feature type="domain" description="ClpX-type ZB" evidence="2">
    <location>
        <begin position="1"/>
        <end position="54"/>
    </location>
</feature>
<feature type="binding site" evidence="2">
    <location>
        <position position="13"/>
    </location>
    <ligand>
        <name>Zn(2+)</name>
        <dbReference type="ChEBI" id="CHEBI:29105"/>
    </ligand>
</feature>
<feature type="binding site" evidence="2">
    <location>
        <position position="16"/>
    </location>
    <ligand>
        <name>Zn(2+)</name>
        <dbReference type="ChEBI" id="CHEBI:29105"/>
    </ligand>
</feature>
<feature type="binding site" evidence="2">
    <location>
        <position position="35"/>
    </location>
    <ligand>
        <name>Zn(2+)</name>
        <dbReference type="ChEBI" id="CHEBI:29105"/>
    </ligand>
</feature>
<feature type="binding site" evidence="2">
    <location>
        <position position="38"/>
    </location>
    <ligand>
        <name>Zn(2+)</name>
        <dbReference type="ChEBI" id="CHEBI:29105"/>
    </ligand>
</feature>
<feature type="binding site" evidence="1">
    <location>
        <begin position="117"/>
        <end position="124"/>
    </location>
    <ligand>
        <name>ATP</name>
        <dbReference type="ChEBI" id="CHEBI:30616"/>
    </ligand>
</feature>
<proteinExistence type="inferred from homology"/>
<keyword id="KW-0067">ATP-binding</keyword>
<keyword id="KW-0143">Chaperone</keyword>
<keyword id="KW-0479">Metal-binding</keyword>
<keyword id="KW-0547">Nucleotide-binding</keyword>
<keyword id="KW-0862">Zinc</keyword>
<reference key="1">
    <citation type="journal article" date="2009" name="J. Bacteriol.">
        <title>Complete genome sequence of the extremophilic Bacillus cereus strain Q1 with industrial applications.</title>
        <authorList>
            <person name="Xiong Z."/>
            <person name="Jiang Y."/>
            <person name="Qi D."/>
            <person name="Lu H."/>
            <person name="Yang F."/>
            <person name="Yang J."/>
            <person name="Chen L."/>
            <person name="Sun L."/>
            <person name="Xu X."/>
            <person name="Xue Y."/>
            <person name="Zhu Y."/>
            <person name="Jin Q."/>
        </authorList>
    </citation>
    <scope>NUCLEOTIDE SEQUENCE [LARGE SCALE GENOMIC DNA]</scope>
    <source>
        <strain>Q1</strain>
    </source>
</reference>
<dbReference type="EMBL" id="CP000227">
    <property type="protein sequence ID" value="ACM14686.1"/>
    <property type="molecule type" value="Genomic_DNA"/>
</dbReference>
<dbReference type="SMR" id="B9IZ47"/>
<dbReference type="KEGG" id="bcq:BCQ_4259"/>
<dbReference type="HOGENOM" id="CLU_014218_8_2_9"/>
<dbReference type="Proteomes" id="UP000000441">
    <property type="component" value="Chromosome"/>
</dbReference>
<dbReference type="GO" id="GO:0009376">
    <property type="term" value="C:HslUV protease complex"/>
    <property type="evidence" value="ECO:0007669"/>
    <property type="project" value="TreeGrafter"/>
</dbReference>
<dbReference type="GO" id="GO:0005524">
    <property type="term" value="F:ATP binding"/>
    <property type="evidence" value="ECO:0007669"/>
    <property type="project" value="UniProtKB-UniRule"/>
</dbReference>
<dbReference type="GO" id="GO:0016887">
    <property type="term" value="F:ATP hydrolysis activity"/>
    <property type="evidence" value="ECO:0007669"/>
    <property type="project" value="InterPro"/>
</dbReference>
<dbReference type="GO" id="GO:0140662">
    <property type="term" value="F:ATP-dependent protein folding chaperone"/>
    <property type="evidence" value="ECO:0007669"/>
    <property type="project" value="InterPro"/>
</dbReference>
<dbReference type="GO" id="GO:0046983">
    <property type="term" value="F:protein dimerization activity"/>
    <property type="evidence" value="ECO:0007669"/>
    <property type="project" value="InterPro"/>
</dbReference>
<dbReference type="GO" id="GO:0051082">
    <property type="term" value="F:unfolded protein binding"/>
    <property type="evidence" value="ECO:0007669"/>
    <property type="project" value="UniProtKB-UniRule"/>
</dbReference>
<dbReference type="GO" id="GO:0008270">
    <property type="term" value="F:zinc ion binding"/>
    <property type="evidence" value="ECO:0007669"/>
    <property type="project" value="InterPro"/>
</dbReference>
<dbReference type="GO" id="GO:0051301">
    <property type="term" value="P:cell division"/>
    <property type="evidence" value="ECO:0007669"/>
    <property type="project" value="TreeGrafter"/>
</dbReference>
<dbReference type="GO" id="GO:0051603">
    <property type="term" value="P:proteolysis involved in protein catabolic process"/>
    <property type="evidence" value="ECO:0007669"/>
    <property type="project" value="TreeGrafter"/>
</dbReference>
<dbReference type="CDD" id="cd19497">
    <property type="entry name" value="RecA-like_ClpX"/>
    <property type="match status" value="1"/>
</dbReference>
<dbReference type="FunFam" id="1.10.8.60:FF:000002">
    <property type="entry name" value="ATP-dependent Clp protease ATP-binding subunit ClpX"/>
    <property type="match status" value="1"/>
</dbReference>
<dbReference type="FunFam" id="3.40.50.300:FF:000005">
    <property type="entry name" value="ATP-dependent Clp protease ATP-binding subunit ClpX"/>
    <property type="match status" value="1"/>
</dbReference>
<dbReference type="Gene3D" id="1.10.8.60">
    <property type="match status" value="1"/>
</dbReference>
<dbReference type="Gene3D" id="6.20.220.10">
    <property type="entry name" value="ClpX chaperone, C4-type zinc finger domain"/>
    <property type="match status" value="1"/>
</dbReference>
<dbReference type="Gene3D" id="3.40.50.300">
    <property type="entry name" value="P-loop containing nucleotide triphosphate hydrolases"/>
    <property type="match status" value="1"/>
</dbReference>
<dbReference type="HAMAP" id="MF_00175">
    <property type="entry name" value="ClpX"/>
    <property type="match status" value="1"/>
</dbReference>
<dbReference type="InterPro" id="IPR003593">
    <property type="entry name" value="AAA+_ATPase"/>
</dbReference>
<dbReference type="InterPro" id="IPR050052">
    <property type="entry name" value="ATP-dep_Clp_protease_ClpX"/>
</dbReference>
<dbReference type="InterPro" id="IPR003959">
    <property type="entry name" value="ATPase_AAA_core"/>
</dbReference>
<dbReference type="InterPro" id="IPR019489">
    <property type="entry name" value="Clp_ATPase_C"/>
</dbReference>
<dbReference type="InterPro" id="IPR004487">
    <property type="entry name" value="Clp_protease_ATP-bd_su_ClpX"/>
</dbReference>
<dbReference type="InterPro" id="IPR046425">
    <property type="entry name" value="ClpX_bact"/>
</dbReference>
<dbReference type="InterPro" id="IPR027417">
    <property type="entry name" value="P-loop_NTPase"/>
</dbReference>
<dbReference type="InterPro" id="IPR010603">
    <property type="entry name" value="Znf_CppX_C4"/>
</dbReference>
<dbReference type="InterPro" id="IPR038366">
    <property type="entry name" value="Znf_CppX_C4_sf"/>
</dbReference>
<dbReference type="NCBIfam" id="TIGR00382">
    <property type="entry name" value="clpX"/>
    <property type="match status" value="1"/>
</dbReference>
<dbReference type="NCBIfam" id="NF003745">
    <property type="entry name" value="PRK05342.1"/>
    <property type="match status" value="1"/>
</dbReference>
<dbReference type="PANTHER" id="PTHR48102:SF7">
    <property type="entry name" value="ATP-DEPENDENT CLP PROTEASE ATP-BINDING SUBUNIT CLPX-LIKE, MITOCHONDRIAL"/>
    <property type="match status" value="1"/>
</dbReference>
<dbReference type="PANTHER" id="PTHR48102">
    <property type="entry name" value="ATP-DEPENDENT CLP PROTEASE ATP-BINDING SUBUNIT CLPX-LIKE, MITOCHONDRIAL-RELATED"/>
    <property type="match status" value="1"/>
</dbReference>
<dbReference type="Pfam" id="PF07724">
    <property type="entry name" value="AAA_2"/>
    <property type="match status" value="1"/>
</dbReference>
<dbReference type="Pfam" id="PF10431">
    <property type="entry name" value="ClpB_D2-small"/>
    <property type="match status" value="1"/>
</dbReference>
<dbReference type="Pfam" id="PF06689">
    <property type="entry name" value="zf-C4_ClpX"/>
    <property type="match status" value="1"/>
</dbReference>
<dbReference type="SMART" id="SM00382">
    <property type="entry name" value="AAA"/>
    <property type="match status" value="1"/>
</dbReference>
<dbReference type="SMART" id="SM01086">
    <property type="entry name" value="ClpB_D2-small"/>
    <property type="match status" value="1"/>
</dbReference>
<dbReference type="SMART" id="SM00994">
    <property type="entry name" value="zf-C4_ClpX"/>
    <property type="match status" value="1"/>
</dbReference>
<dbReference type="SUPFAM" id="SSF57716">
    <property type="entry name" value="Glucocorticoid receptor-like (DNA-binding domain)"/>
    <property type="match status" value="1"/>
</dbReference>
<dbReference type="SUPFAM" id="SSF52540">
    <property type="entry name" value="P-loop containing nucleoside triphosphate hydrolases"/>
    <property type="match status" value="1"/>
</dbReference>
<dbReference type="PROSITE" id="PS51902">
    <property type="entry name" value="CLPX_ZB"/>
    <property type="match status" value="1"/>
</dbReference>
<sequence length="419" mass="46199">MFKFNDEKGQLKCSFCGKTQTQVRKLVAGPGVYICDECIELCTEIVQEELAKDEEVEFKDVPKPVEIREILDEYVIGQDNAKKALAVAVYNHYKRINSNSKIDDVELAKSNIALIGPTGSGKTLLAQTLARILNVPFAIADATSLTEAGYVGEDVENILLKLIQAADYDVEKAEKGIIYIDEIDKVARKSENPSITRDVSGEGVQQALLKILEGTVASVPPQGGRKHPHQEFIQIDTTNILFICGGAFDGIEPIIKRRLGEKVIGFGSEKKNADVNEKHVLSHVLPEDLLRFGLIPEFIGRLPVIANLEPLDEDALVDILTKPKNALVKQFQKLLELDDVELEFEEGALIEIAKKAIERKTGARGLRSIIEGLMLEVMFELPSRKDIEKCILTKETVADNAAPKLVLQDGTVLDTKTSA</sequence>
<gene>
    <name evidence="1" type="primary">clpX</name>
    <name type="ordered locus">BCQ_4259</name>
</gene>
<protein>
    <recommendedName>
        <fullName evidence="1">ATP-dependent Clp protease ATP-binding subunit ClpX</fullName>
    </recommendedName>
</protein>
<comment type="function">
    <text evidence="1">ATP-dependent specificity component of the Clp protease. It directs the protease to specific substrates. Can perform chaperone functions in the absence of ClpP.</text>
</comment>
<comment type="subunit">
    <text evidence="1">Component of the ClpX-ClpP complex. Forms a hexameric ring that, in the presence of ATP, binds to fourteen ClpP subunits assembled into a disk-like structure with a central cavity, resembling the structure of eukaryotic proteasomes.</text>
</comment>
<comment type="similarity">
    <text evidence="1">Belongs to the ClpX chaperone family.</text>
</comment>
<organism>
    <name type="scientific">Bacillus cereus (strain Q1)</name>
    <dbReference type="NCBI Taxonomy" id="361100"/>
    <lineage>
        <taxon>Bacteria</taxon>
        <taxon>Bacillati</taxon>
        <taxon>Bacillota</taxon>
        <taxon>Bacilli</taxon>
        <taxon>Bacillales</taxon>
        <taxon>Bacillaceae</taxon>
        <taxon>Bacillus</taxon>
        <taxon>Bacillus cereus group</taxon>
    </lineage>
</organism>
<evidence type="ECO:0000255" key="1">
    <source>
        <dbReference type="HAMAP-Rule" id="MF_00175"/>
    </source>
</evidence>
<evidence type="ECO:0000255" key="2">
    <source>
        <dbReference type="PROSITE-ProRule" id="PRU01250"/>
    </source>
</evidence>